<dbReference type="EC" id="6.3.5.-" evidence="1"/>
<dbReference type="EMBL" id="AM747720">
    <property type="protein sequence ID" value="CAR50796.1"/>
    <property type="molecule type" value="Genomic_DNA"/>
</dbReference>
<dbReference type="RefSeq" id="WP_006482505.1">
    <property type="nucleotide sequence ID" value="NC_011000.1"/>
</dbReference>
<dbReference type="SMR" id="B4E7X7"/>
<dbReference type="GeneID" id="56559699"/>
<dbReference type="KEGG" id="bcj:BCAL0485"/>
<dbReference type="eggNOG" id="COG0064">
    <property type="taxonomic scope" value="Bacteria"/>
</dbReference>
<dbReference type="HOGENOM" id="CLU_019240_0_0_4"/>
<dbReference type="BioCyc" id="BCEN216591:G1G1V-553-MONOMER"/>
<dbReference type="Proteomes" id="UP000001035">
    <property type="component" value="Chromosome 1"/>
</dbReference>
<dbReference type="GO" id="GO:0050566">
    <property type="term" value="F:asparaginyl-tRNA synthase (glutamine-hydrolyzing) activity"/>
    <property type="evidence" value="ECO:0007669"/>
    <property type="project" value="RHEA"/>
</dbReference>
<dbReference type="GO" id="GO:0005524">
    <property type="term" value="F:ATP binding"/>
    <property type="evidence" value="ECO:0007669"/>
    <property type="project" value="UniProtKB-KW"/>
</dbReference>
<dbReference type="GO" id="GO:0050567">
    <property type="term" value="F:glutaminyl-tRNA synthase (glutamine-hydrolyzing) activity"/>
    <property type="evidence" value="ECO:0007669"/>
    <property type="project" value="UniProtKB-UniRule"/>
</dbReference>
<dbReference type="GO" id="GO:0070681">
    <property type="term" value="P:glutaminyl-tRNAGln biosynthesis via transamidation"/>
    <property type="evidence" value="ECO:0007669"/>
    <property type="project" value="TreeGrafter"/>
</dbReference>
<dbReference type="GO" id="GO:0006412">
    <property type="term" value="P:translation"/>
    <property type="evidence" value="ECO:0007669"/>
    <property type="project" value="UniProtKB-UniRule"/>
</dbReference>
<dbReference type="FunFam" id="1.10.10.410:FF:000001">
    <property type="entry name" value="Aspartyl/glutamyl-tRNA(Asn/Gln) amidotransferase subunit B"/>
    <property type="match status" value="1"/>
</dbReference>
<dbReference type="FunFam" id="1.10.150.380:FF:000001">
    <property type="entry name" value="Aspartyl/glutamyl-tRNA(Asn/Gln) amidotransferase subunit B"/>
    <property type="match status" value="1"/>
</dbReference>
<dbReference type="Gene3D" id="1.10.10.410">
    <property type="match status" value="1"/>
</dbReference>
<dbReference type="Gene3D" id="1.10.150.380">
    <property type="entry name" value="GatB domain, N-terminal subdomain"/>
    <property type="match status" value="1"/>
</dbReference>
<dbReference type="HAMAP" id="MF_00121">
    <property type="entry name" value="GatB"/>
    <property type="match status" value="1"/>
</dbReference>
<dbReference type="InterPro" id="IPR017959">
    <property type="entry name" value="Asn/Gln-tRNA_amidoTrfase_suB/E"/>
</dbReference>
<dbReference type="InterPro" id="IPR006075">
    <property type="entry name" value="Asn/Gln-tRNA_Trfase_suB/E_cat"/>
</dbReference>
<dbReference type="InterPro" id="IPR018027">
    <property type="entry name" value="Asn/Gln_amidotransferase"/>
</dbReference>
<dbReference type="InterPro" id="IPR003789">
    <property type="entry name" value="Asn/Gln_tRNA_amidoTrase-B-like"/>
</dbReference>
<dbReference type="InterPro" id="IPR004413">
    <property type="entry name" value="GatB"/>
</dbReference>
<dbReference type="InterPro" id="IPR042114">
    <property type="entry name" value="GatB_C_1"/>
</dbReference>
<dbReference type="InterPro" id="IPR023168">
    <property type="entry name" value="GatB_Yqey_C_2"/>
</dbReference>
<dbReference type="InterPro" id="IPR017958">
    <property type="entry name" value="Gln-tRNA_amidoTrfase_suB_CS"/>
</dbReference>
<dbReference type="InterPro" id="IPR014746">
    <property type="entry name" value="Gln_synth/guanido_kin_cat_dom"/>
</dbReference>
<dbReference type="NCBIfam" id="TIGR00133">
    <property type="entry name" value="gatB"/>
    <property type="match status" value="1"/>
</dbReference>
<dbReference type="NCBIfam" id="NF004012">
    <property type="entry name" value="PRK05477.1-2"/>
    <property type="match status" value="1"/>
</dbReference>
<dbReference type="NCBIfam" id="NF004014">
    <property type="entry name" value="PRK05477.1-4"/>
    <property type="match status" value="1"/>
</dbReference>
<dbReference type="NCBIfam" id="NF004015">
    <property type="entry name" value="PRK05477.1-5"/>
    <property type="match status" value="1"/>
</dbReference>
<dbReference type="PANTHER" id="PTHR11659">
    <property type="entry name" value="GLUTAMYL-TRNA GLN AMIDOTRANSFERASE SUBUNIT B MITOCHONDRIAL AND PROKARYOTIC PET112-RELATED"/>
    <property type="match status" value="1"/>
</dbReference>
<dbReference type="PANTHER" id="PTHR11659:SF0">
    <property type="entry name" value="GLUTAMYL-TRNA(GLN) AMIDOTRANSFERASE SUBUNIT B, MITOCHONDRIAL"/>
    <property type="match status" value="1"/>
</dbReference>
<dbReference type="Pfam" id="PF02934">
    <property type="entry name" value="GatB_N"/>
    <property type="match status" value="1"/>
</dbReference>
<dbReference type="Pfam" id="PF02637">
    <property type="entry name" value="GatB_Yqey"/>
    <property type="match status" value="1"/>
</dbReference>
<dbReference type="SMART" id="SM00845">
    <property type="entry name" value="GatB_Yqey"/>
    <property type="match status" value="1"/>
</dbReference>
<dbReference type="SUPFAM" id="SSF89095">
    <property type="entry name" value="GatB/YqeY motif"/>
    <property type="match status" value="1"/>
</dbReference>
<dbReference type="SUPFAM" id="SSF55931">
    <property type="entry name" value="Glutamine synthetase/guanido kinase"/>
    <property type="match status" value="1"/>
</dbReference>
<dbReference type="PROSITE" id="PS01234">
    <property type="entry name" value="GATB"/>
    <property type="match status" value="1"/>
</dbReference>
<accession>B4E7X7</accession>
<feature type="chain" id="PRO_1000095192" description="Aspartyl/glutamyl-tRNA(Asn/Gln) amidotransferase subunit B">
    <location>
        <begin position="1"/>
        <end position="491"/>
    </location>
</feature>
<protein>
    <recommendedName>
        <fullName evidence="1">Aspartyl/glutamyl-tRNA(Asn/Gln) amidotransferase subunit B</fullName>
        <shortName evidence="1">Asp/Glu-ADT subunit B</shortName>
        <ecNumber evidence="1">6.3.5.-</ecNumber>
    </recommendedName>
</protein>
<gene>
    <name evidence="1" type="primary">gatB</name>
    <name type="ordered locus">BceJ2315_04830</name>
    <name type="ORF">BCAL0485</name>
</gene>
<keyword id="KW-0067">ATP-binding</keyword>
<keyword id="KW-0436">Ligase</keyword>
<keyword id="KW-0547">Nucleotide-binding</keyword>
<keyword id="KW-0648">Protein biosynthesis</keyword>
<reference key="1">
    <citation type="journal article" date="2009" name="J. Bacteriol.">
        <title>The genome of Burkholderia cenocepacia J2315, an epidemic pathogen of cystic fibrosis patients.</title>
        <authorList>
            <person name="Holden M.T."/>
            <person name="Seth-Smith H.M."/>
            <person name="Crossman L.C."/>
            <person name="Sebaihia M."/>
            <person name="Bentley S.D."/>
            <person name="Cerdeno-Tarraga A.M."/>
            <person name="Thomson N.R."/>
            <person name="Bason N."/>
            <person name="Quail M.A."/>
            <person name="Sharp S."/>
            <person name="Cherevach I."/>
            <person name="Churcher C."/>
            <person name="Goodhead I."/>
            <person name="Hauser H."/>
            <person name="Holroyd N."/>
            <person name="Mungall K."/>
            <person name="Scott P."/>
            <person name="Walker D."/>
            <person name="White B."/>
            <person name="Rose H."/>
            <person name="Iversen P."/>
            <person name="Mil-Homens D."/>
            <person name="Rocha E.P."/>
            <person name="Fialho A.M."/>
            <person name="Baldwin A."/>
            <person name="Dowson C."/>
            <person name="Barrell B.G."/>
            <person name="Govan J.R."/>
            <person name="Vandamme P."/>
            <person name="Hart C.A."/>
            <person name="Mahenthiralingam E."/>
            <person name="Parkhill J."/>
        </authorList>
    </citation>
    <scope>NUCLEOTIDE SEQUENCE [LARGE SCALE GENOMIC DNA]</scope>
    <source>
        <strain>ATCC BAA-245 / DSM 16553 / LMG 16656 / NCTC 13227 / J2315 / CF5610</strain>
    </source>
</reference>
<proteinExistence type="inferred from homology"/>
<name>GATB_BURCJ</name>
<organism>
    <name type="scientific">Burkholderia cenocepacia (strain ATCC BAA-245 / DSM 16553 / LMG 16656 / NCTC 13227 / J2315 / CF5610)</name>
    <name type="common">Burkholderia cepacia (strain J2315)</name>
    <dbReference type="NCBI Taxonomy" id="216591"/>
    <lineage>
        <taxon>Bacteria</taxon>
        <taxon>Pseudomonadati</taxon>
        <taxon>Pseudomonadota</taxon>
        <taxon>Betaproteobacteria</taxon>
        <taxon>Burkholderiales</taxon>
        <taxon>Burkholderiaceae</taxon>
        <taxon>Burkholderia</taxon>
        <taxon>Burkholderia cepacia complex</taxon>
    </lineage>
</organism>
<comment type="function">
    <text evidence="1">Allows the formation of correctly charged Asn-tRNA(Asn) or Gln-tRNA(Gln) through the transamidation of misacylated Asp-tRNA(Asn) or Glu-tRNA(Gln) in organisms which lack either or both of asparaginyl-tRNA or glutaminyl-tRNA synthetases. The reaction takes place in the presence of glutamine and ATP through an activated phospho-Asp-tRNA(Asn) or phospho-Glu-tRNA(Gln).</text>
</comment>
<comment type="catalytic activity">
    <reaction evidence="1">
        <text>L-glutamyl-tRNA(Gln) + L-glutamine + ATP + H2O = L-glutaminyl-tRNA(Gln) + L-glutamate + ADP + phosphate + H(+)</text>
        <dbReference type="Rhea" id="RHEA:17521"/>
        <dbReference type="Rhea" id="RHEA-COMP:9681"/>
        <dbReference type="Rhea" id="RHEA-COMP:9684"/>
        <dbReference type="ChEBI" id="CHEBI:15377"/>
        <dbReference type="ChEBI" id="CHEBI:15378"/>
        <dbReference type="ChEBI" id="CHEBI:29985"/>
        <dbReference type="ChEBI" id="CHEBI:30616"/>
        <dbReference type="ChEBI" id="CHEBI:43474"/>
        <dbReference type="ChEBI" id="CHEBI:58359"/>
        <dbReference type="ChEBI" id="CHEBI:78520"/>
        <dbReference type="ChEBI" id="CHEBI:78521"/>
        <dbReference type="ChEBI" id="CHEBI:456216"/>
    </reaction>
</comment>
<comment type="catalytic activity">
    <reaction evidence="1">
        <text>L-aspartyl-tRNA(Asn) + L-glutamine + ATP + H2O = L-asparaginyl-tRNA(Asn) + L-glutamate + ADP + phosphate + 2 H(+)</text>
        <dbReference type="Rhea" id="RHEA:14513"/>
        <dbReference type="Rhea" id="RHEA-COMP:9674"/>
        <dbReference type="Rhea" id="RHEA-COMP:9677"/>
        <dbReference type="ChEBI" id="CHEBI:15377"/>
        <dbReference type="ChEBI" id="CHEBI:15378"/>
        <dbReference type="ChEBI" id="CHEBI:29985"/>
        <dbReference type="ChEBI" id="CHEBI:30616"/>
        <dbReference type="ChEBI" id="CHEBI:43474"/>
        <dbReference type="ChEBI" id="CHEBI:58359"/>
        <dbReference type="ChEBI" id="CHEBI:78515"/>
        <dbReference type="ChEBI" id="CHEBI:78516"/>
        <dbReference type="ChEBI" id="CHEBI:456216"/>
    </reaction>
</comment>
<comment type="subunit">
    <text evidence="1">Heterotrimer of A, B and C subunits.</text>
</comment>
<comment type="similarity">
    <text evidence="1">Belongs to the GatB/GatE family. GatB subfamily.</text>
</comment>
<sequence>MATQWEVVIGLETHAQLSTVSKIFSGASTQFGAEPNTQACPVDLALPGVLPVLNRGAVERAIRFGLAIGSTIAPRSIFARKNYFYPDLPKGYQISQYEIPVVQGGQITIQVPANEKAGKAAYEKTVNLTRAHLEEDAGKSLHEDFAGMTGIDLNRAGTPLLEIVTEPEMRSAAEAVAYAKALHGLVVWLGICDGNMQEGSFRCDANVSVRPVGQEKFGTRAEIKNLNSFRFLEEAINYEVRRQIELIEDGGEVVQETRLYDPDKRETRSMRSKEDAHDYRYFPDPDLMPLVIGQDWIERVQSGMPELPAAMQQRFVDEYGVSAYDAGVLTSSKAMAAYFEAVVAKAGAANAKIAANWLMGDVSSQLNRDGIEIDAIPVSAAQLALLLQRIADGTISNKIAKEIFATIWDEKATDEGAADRIIDAKGLKQISDTGALEAIIDEVLAANAKSVEEFRAGKEKAFNALIGQAMKATKGKANPQQVNELLKKKLG</sequence>
<evidence type="ECO:0000255" key="1">
    <source>
        <dbReference type="HAMAP-Rule" id="MF_00121"/>
    </source>
</evidence>